<gene>
    <name type="primary">PNK/PNL</name>
    <name type="ORF">ORF86</name>
</gene>
<evidence type="ECO:0000255" key="1"/>
<evidence type="ECO:0000269" key="2">
    <source>
    </source>
</evidence>
<evidence type="ECO:0000305" key="3"/>
<dbReference type="EC" id="2.7.1.78"/>
<dbReference type="EC" id="6.5.1.3" evidence="3"/>
<dbReference type="EMBL" id="L22858">
    <property type="protein sequence ID" value="AAA66716.1"/>
    <property type="molecule type" value="Genomic_DNA"/>
</dbReference>
<dbReference type="PIR" id="G72860">
    <property type="entry name" value="G72860"/>
</dbReference>
<dbReference type="SMR" id="P41476"/>
<dbReference type="KEGG" id="vg:1403919"/>
<dbReference type="OrthoDB" id="1878at10239"/>
<dbReference type="Proteomes" id="UP000008292">
    <property type="component" value="Segment"/>
</dbReference>
<dbReference type="GO" id="GO:0005524">
    <property type="term" value="F:ATP binding"/>
    <property type="evidence" value="ECO:0007669"/>
    <property type="project" value="UniProtKB-KW"/>
</dbReference>
<dbReference type="GO" id="GO:0046404">
    <property type="term" value="F:ATP-dependent polydeoxyribonucleotide 5'-hydroxyl-kinase activity"/>
    <property type="evidence" value="ECO:0007669"/>
    <property type="project" value="RHEA"/>
</dbReference>
<dbReference type="GO" id="GO:0003972">
    <property type="term" value="F:RNA ligase (ATP) activity"/>
    <property type="evidence" value="ECO:0007669"/>
    <property type="project" value="UniProtKB-EC"/>
</dbReference>
<dbReference type="GO" id="GO:0042245">
    <property type="term" value="P:RNA repair"/>
    <property type="evidence" value="ECO:0007669"/>
    <property type="project" value="UniProtKB-KW"/>
</dbReference>
<dbReference type="Gene3D" id="3.40.50.1000">
    <property type="entry name" value="HAD superfamily/HAD-like"/>
    <property type="match status" value="1"/>
</dbReference>
<dbReference type="Gene3D" id="3.40.50.300">
    <property type="entry name" value="P-loop containing nucleotide triphosphate hydrolases"/>
    <property type="match status" value="1"/>
</dbReference>
<dbReference type="InterPro" id="IPR036412">
    <property type="entry name" value="HAD-like_sf"/>
</dbReference>
<dbReference type="InterPro" id="IPR056782">
    <property type="entry name" value="HAD_PNKP"/>
</dbReference>
<dbReference type="InterPro" id="IPR023214">
    <property type="entry name" value="HAD_sf"/>
</dbReference>
<dbReference type="InterPro" id="IPR027417">
    <property type="entry name" value="P-loop_NTPase"/>
</dbReference>
<dbReference type="InterPro" id="IPR019039">
    <property type="entry name" value="T4-Rnl1-like_N"/>
</dbReference>
<dbReference type="Pfam" id="PF13671">
    <property type="entry name" value="AAA_33"/>
    <property type="match status" value="1"/>
</dbReference>
<dbReference type="Pfam" id="PF25109">
    <property type="entry name" value="HAD_PNKP"/>
    <property type="match status" value="1"/>
</dbReference>
<dbReference type="Pfam" id="PF09511">
    <property type="entry name" value="RNA_lig_T4_1"/>
    <property type="match status" value="1"/>
</dbReference>
<dbReference type="SUPFAM" id="SSF56784">
    <property type="entry name" value="HAD-like"/>
    <property type="match status" value="1"/>
</dbReference>
<dbReference type="SUPFAM" id="SSF52540">
    <property type="entry name" value="P-loop containing nucleoside triphosphate hydrolases"/>
    <property type="match status" value="1"/>
</dbReference>
<comment type="function">
    <text evidence="2">Trifunctional enzyme that possesses a bifunctional polynucleotide kinase/phosphatase activity and an ATP-dependent RNA ligase activity. May therefore play a role to evade an RNA damage-based host response.</text>
</comment>
<comment type="catalytic activity">
    <reaction>
        <text>a 5'-end dephospho-2'-deoxyribonucleoside-DNA + ATP = a 5'-end 5'-phospho-2'-deoxyribonucleoside-DNA + ADP + H(+)</text>
        <dbReference type="Rhea" id="RHEA:15669"/>
        <dbReference type="Rhea" id="RHEA-COMP:13180"/>
        <dbReference type="Rhea" id="RHEA-COMP:13184"/>
        <dbReference type="ChEBI" id="CHEBI:15378"/>
        <dbReference type="ChEBI" id="CHEBI:30616"/>
        <dbReference type="ChEBI" id="CHEBI:136412"/>
        <dbReference type="ChEBI" id="CHEBI:136416"/>
        <dbReference type="ChEBI" id="CHEBI:456216"/>
        <dbReference type="EC" id="2.7.1.78"/>
    </reaction>
</comment>
<comment type="catalytic activity">
    <reaction evidence="3">
        <text>ATP + (ribonucleotide)n-3'-hydroxyl + 5'-phospho-(ribonucleotide)m = (ribonucleotide)n+m + AMP + diphosphate.</text>
        <dbReference type="EC" id="6.5.1.3"/>
    </reaction>
</comment>
<sequence>MLHVSRLLANGGVKNLCDKFKVKIKNYTEHDLMVLNYESFERDRDHPVVVECRGLILNSRTYAVVSRSFDRFFNFQELLQNIGGEDAHHKLFQSKENFKFYEKIDGSLIKIYKYNGEWHASTRGSAFAENLCVSDVTFKRLVLQALQLDEAHNQFQALCNEYLDCASTHMFELTSKHNRIVTVYDEQPTLWYLASRNNETGDYFYCSNLPFCKYPKCYEFTSVQECVEHAAQLKNLEEGFVVYDKNNAPLCKIKSDVYLNMHKNQSRAENPTKLAQLVINGEHDDFLALFPHLKSVIKPYVDARNTFTNESTINIMVSGLTLNQQRFNELVQTLPWKCLAYRCRKAQTIDVESEFLKLTEPEKIKMIKNIIKFVSTKQALNNKLAPTIKLPSSKQLLVLIGISGSGKSTYAKSLKGYTEINRDDVRVKLFLNGDYTKLNAFYNQSRKCRQTKEEQITKMCIEQFLKAAKCGANVVVSDTNLNTQSVDMWQKMAATHNYHFLTRLMDVSLETALERNYKRSDKFPLNPETIKKQYKKFLKVNNFEYYVPVGDKFPRAVLCDLDGTVALPTNRSFYDFDNRVAQDEARLDVITCVKYLANCHDAIIVFMSGRSVICEQPTRNWIEKYFDIKSYKLFMRPSDDTCKDYLLKLKLFNNYIRGKYNVIAVFDDRPCVVRMWQDLKIPTVFNVCRDYLEF</sequence>
<organism>
    <name type="scientific">Autographa californica nuclear polyhedrosis virus</name>
    <name type="common">AcMNPV</name>
    <dbReference type="NCBI Taxonomy" id="46015"/>
    <lineage>
        <taxon>Viruses</taxon>
        <taxon>Viruses incertae sedis</taxon>
        <taxon>Naldaviricetes</taxon>
        <taxon>Lefavirales</taxon>
        <taxon>Baculoviridae</taxon>
        <taxon>Alphabaculovirus</taxon>
        <taxon>Alphabaculovirus aucalifornicae</taxon>
    </lineage>
</organism>
<feature type="chain" id="PRO_0000132846" description="Putative bifunctional polynucleotide kinase/RNA ligase">
    <location>
        <begin position="1"/>
        <end position="694"/>
    </location>
</feature>
<feature type="region of interest" description="Ligase domain" evidence="2">
    <location>
        <begin position="1"/>
        <end position="385"/>
    </location>
</feature>
<feature type="region of interest" description="Bifunctional 5'-OH polynucleotide kinase/polynucleotide 3'-phosphatase" evidence="2">
    <location>
        <begin position="394"/>
        <end position="694"/>
    </location>
</feature>
<feature type="binding site" evidence="1">
    <location>
        <begin position="401"/>
        <end position="408"/>
    </location>
    <ligand>
        <name>ATP</name>
        <dbReference type="ChEBI" id="CHEBI:30616"/>
    </ligand>
</feature>
<name>RNL1_NPVAC</name>
<keyword id="KW-0067">ATP-binding</keyword>
<keyword id="KW-0418">Kinase</keyword>
<keyword id="KW-0436">Ligase</keyword>
<keyword id="KW-0511">Multifunctional enzyme</keyword>
<keyword id="KW-0547">Nucleotide-binding</keyword>
<keyword id="KW-1185">Reference proteome</keyword>
<keyword id="KW-0692">RNA repair</keyword>
<keyword id="KW-0808">Transferase</keyword>
<reference key="1">
    <citation type="journal article" date="1994" name="Virology">
        <title>The complete DNA sequence of Autographa californica nuclear polyhedrosis virus.</title>
        <authorList>
            <person name="Ayres M.D."/>
            <person name="Howard S.C."/>
            <person name="Kuzio J."/>
            <person name="Lopez-Ferber M."/>
            <person name="Possee R.D."/>
        </authorList>
    </citation>
    <scope>NUCLEOTIDE SEQUENCE [LARGE SCALE GENOMIC DNA]</scope>
    <source>
        <strain>C6</strain>
    </source>
</reference>
<reference key="2">
    <citation type="journal article" date="2004" name="J. Biol. Chem.">
        <title>Characterization of a baculovirus enzyme with RNA ligase, polynucleotide 5'-kinase, and polynucleotide 3'-phosphatase activities.</title>
        <authorList>
            <person name="Martins A."/>
            <person name="Shuman S."/>
        </authorList>
    </citation>
    <scope>FUNCTION</scope>
    <scope>DOMAIN</scope>
</reference>
<accession>P41476</accession>
<proteinExistence type="predicted"/>
<organismHost>
    <name type="scientific">Lepidoptera</name>
    <name type="common">butterflies and moths</name>
    <dbReference type="NCBI Taxonomy" id="7088"/>
</organismHost>
<protein>
    <recommendedName>
        <fullName>Putative bifunctional polynucleotide kinase/RNA ligase</fullName>
    </recommendedName>
    <domain>
        <recommendedName>
            <fullName>Polynucleotide kinase</fullName>
            <shortName>PNK</shortName>
            <ecNumber>2.7.1.78</ecNumber>
        </recommendedName>
        <alternativeName>
            <fullName>Polynucleotide 5'-hydroxy-kinase</fullName>
        </alternativeName>
    </domain>
    <domain>
        <recommendedName>
            <fullName>RNA ligase</fullName>
            <ecNumber evidence="3">6.5.1.3</ecNumber>
        </recommendedName>
    </domain>
</protein>